<dbReference type="EMBL" id="CP000350">
    <property type="protein sequence ID" value="ABJ76828.1"/>
    <property type="molecule type" value="Genomic_DNA"/>
</dbReference>
<dbReference type="RefSeq" id="WP_002753723.1">
    <property type="nucleotide sequence ID" value="NC_008510.1"/>
</dbReference>
<dbReference type="SMR" id="Q04QJ2"/>
<dbReference type="KEGG" id="lbj:LBJ_2362"/>
<dbReference type="HOGENOM" id="CLU_072226_1_1_12"/>
<dbReference type="Proteomes" id="UP000000656">
    <property type="component" value="Chromosome 1"/>
</dbReference>
<dbReference type="GO" id="GO:0015935">
    <property type="term" value="C:small ribosomal subunit"/>
    <property type="evidence" value="ECO:0007669"/>
    <property type="project" value="InterPro"/>
</dbReference>
<dbReference type="GO" id="GO:0019843">
    <property type="term" value="F:rRNA binding"/>
    <property type="evidence" value="ECO:0007669"/>
    <property type="project" value="UniProtKB-UniRule"/>
</dbReference>
<dbReference type="GO" id="GO:0003735">
    <property type="term" value="F:structural constituent of ribosome"/>
    <property type="evidence" value="ECO:0007669"/>
    <property type="project" value="InterPro"/>
</dbReference>
<dbReference type="GO" id="GO:0000049">
    <property type="term" value="F:tRNA binding"/>
    <property type="evidence" value="ECO:0007669"/>
    <property type="project" value="UniProtKB-UniRule"/>
</dbReference>
<dbReference type="GO" id="GO:0006412">
    <property type="term" value="P:translation"/>
    <property type="evidence" value="ECO:0007669"/>
    <property type="project" value="UniProtKB-UniRule"/>
</dbReference>
<dbReference type="CDD" id="cd14869">
    <property type="entry name" value="uS7_Bacteria"/>
    <property type="match status" value="1"/>
</dbReference>
<dbReference type="FunFam" id="1.10.455.10:FF:000001">
    <property type="entry name" value="30S ribosomal protein S7"/>
    <property type="match status" value="1"/>
</dbReference>
<dbReference type="Gene3D" id="1.10.455.10">
    <property type="entry name" value="Ribosomal protein S7 domain"/>
    <property type="match status" value="1"/>
</dbReference>
<dbReference type="HAMAP" id="MF_00480_B">
    <property type="entry name" value="Ribosomal_uS7_B"/>
    <property type="match status" value="1"/>
</dbReference>
<dbReference type="InterPro" id="IPR000235">
    <property type="entry name" value="Ribosomal_uS7"/>
</dbReference>
<dbReference type="InterPro" id="IPR005717">
    <property type="entry name" value="Ribosomal_uS7_bac/org-type"/>
</dbReference>
<dbReference type="InterPro" id="IPR023798">
    <property type="entry name" value="Ribosomal_uS7_dom"/>
</dbReference>
<dbReference type="InterPro" id="IPR036823">
    <property type="entry name" value="Ribosomal_uS7_dom_sf"/>
</dbReference>
<dbReference type="NCBIfam" id="TIGR01029">
    <property type="entry name" value="rpsG_bact"/>
    <property type="match status" value="1"/>
</dbReference>
<dbReference type="PANTHER" id="PTHR11205">
    <property type="entry name" value="RIBOSOMAL PROTEIN S7"/>
    <property type="match status" value="1"/>
</dbReference>
<dbReference type="Pfam" id="PF00177">
    <property type="entry name" value="Ribosomal_S7"/>
    <property type="match status" value="1"/>
</dbReference>
<dbReference type="PIRSF" id="PIRSF002122">
    <property type="entry name" value="RPS7p_RPS7a_RPS5e_RPS7o"/>
    <property type="match status" value="1"/>
</dbReference>
<dbReference type="SUPFAM" id="SSF47973">
    <property type="entry name" value="Ribosomal protein S7"/>
    <property type="match status" value="1"/>
</dbReference>
<keyword id="KW-0687">Ribonucleoprotein</keyword>
<keyword id="KW-0689">Ribosomal protein</keyword>
<keyword id="KW-0694">RNA-binding</keyword>
<keyword id="KW-0699">rRNA-binding</keyword>
<keyword id="KW-0820">tRNA-binding</keyword>
<accession>Q04QJ2</accession>
<gene>
    <name evidence="1" type="primary">rpsG</name>
    <name type="ordered locus">LBJ_2362</name>
</gene>
<name>RS7_LEPBJ</name>
<reference key="1">
    <citation type="journal article" date="2006" name="Proc. Natl. Acad. Sci. U.S.A.">
        <title>Genome reduction in Leptospira borgpetersenii reflects limited transmission potential.</title>
        <authorList>
            <person name="Bulach D.M."/>
            <person name="Zuerner R.L."/>
            <person name="Wilson P."/>
            <person name="Seemann T."/>
            <person name="McGrath A."/>
            <person name="Cullen P.A."/>
            <person name="Davis J."/>
            <person name="Johnson M."/>
            <person name="Kuczek E."/>
            <person name="Alt D.P."/>
            <person name="Peterson-Burch B."/>
            <person name="Coppel R.L."/>
            <person name="Rood J.I."/>
            <person name="Davies J.K."/>
            <person name="Adler B."/>
        </authorList>
    </citation>
    <scope>NUCLEOTIDE SEQUENCE [LARGE SCALE GENOMIC DNA]</scope>
    <source>
        <strain>JB197</strain>
    </source>
</reference>
<organism>
    <name type="scientific">Leptospira borgpetersenii serovar Hardjo-bovis (strain JB197)</name>
    <dbReference type="NCBI Taxonomy" id="355277"/>
    <lineage>
        <taxon>Bacteria</taxon>
        <taxon>Pseudomonadati</taxon>
        <taxon>Spirochaetota</taxon>
        <taxon>Spirochaetia</taxon>
        <taxon>Leptospirales</taxon>
        <taxon>Leptospiraceae</taxon>
        <taxon>Leptospira</taxon>
    </lineage>
</organism>
<proteinExistence type="inferred from homology"/>
<sequence>MSRRRGKVEPRKITPDPVYNDVQVAKFINCLMLSGEKSVAERLFYDALEIIQKKTGNDPYTTFREALENAKPQVEVKSRRVGGVTYQVPIEVRPERRLALGIRWLIRYSRDRNEKGMASKLAAEFIEAQKGTGSAIKKKEDIRKMAEANKAFSHYRW</sequence>
<feature type="chain" id="PRO_1000014218" description="Small ribosomal subunit protein uS7">
    <location>
        <begin position="1"/>
        <end position="157"/>
    </location>
</feature>
<comment type="function">
    <text evidence="1">One of the primary rRNA binding proteins, it binds directly to 16S rRNA where it nucleates assembly of the head domain of the 30S subunit. Is located at the subunit interface close to the decoding center, probably blocks exit of the E-site tRNA.</text>
</comment>
<comment type="subunit">
    <text evidence="1">Part of the 30S ribosomal subunit. Contacts proteins S9 and S11.</text>
</comment>
<comment type="similarity">
    <text evidence="1">Belongs to the universal ribosomal protein uS7 family.</text>
</comment>
<protein>
    <recommendedName>
        <fullName evidence="1">Small ribosomal subunit protein uS7</fullName>
    </recommendedName>
    <alternativeName>
        <fullName evidence="2">30S ribosomal protein S7</fullName>
    </alternativeName>
</protein>
<evidence type="ECO:0000255" key="1">
    <source>
        <dbReference type="HAMAP-Rule" id="MF_00480"/>
    </source>
</evidence>
<evidence type="ECO:0000305" key="2"/>